<gene>
    <name evidence="4" type="primary">RTL9</name>
    <name type="synonym">KIAA1318</name>
    <name type="synonym">RGAG1</name>
</gene>
<sequence>MSIPLHSLRFNNTMREENVEPQNKQMAFCRPMTETRADVQILHSHVQLPIVSTSASDPGGTSTQLMTSPVFDTMSAPLMGVPNSGALSPPLMPASDSGALSPLLMPASDSGALSPLLMPALDSGTLSPLLSTSEYGVMSPGMMTIPDFGTMSATLMVAPDSAEISPLAMPAPSSGVVCTPIMSTSSSEAMSTPLMLAPDSGELSPILMQDMNPGVMSTQPVPAPSSEAMSPLQITDEDTEAMSKVLMTALASGEISSLLMSGTDSEAISSLIMSAVASGGTSPQPTSTQNSGGIPTPLMSDLDSGIMSSLLMSSPGSEVMSTPLLSVPDAGEMSTLPKPAPDAEAMSPALMTALPSGVMPTQTMPAPGSGAMSPWSTQNVDSEMMSNPPVRATASGVMSAPPVRALDSGAMSTPLMGAPASGNMSTLQKTVPASGAMTTSLMTVPSSGVMSTEQMSATASRVMSAQLTMAKTSGAMPTGSMKAVAKQYKRATASGKMSTPLRRAPTSGAMSTQPVTATASETMSMPQLTVPASGSMSMLQMRAPVSEAMSMPQMRTMASGLTSAAQMKAMTSGAMSTPLMTAQTSGSTSTLLMRDTASGVMSCPQMRSLASGALSKPLMTPKASGTMFTEKMTTTASEAMPTLLMRDTVSGALSMPQMTDTASGGLSASLMRDTASGAMSTSQMTATVSGGMSMPLMRAQDPGVMPASLMRAKVSGKMLSQPMSTQDPGGMSMSPMKSMTAGGMQMNSPTSDVMSTPTVRAWTSETMSTPLMRTSDPGERPSLLTRASSSGEMSLPLMRAPASGEIATPLRSPAYGAMSAPQMTATASGMMSSMPQVKAPISGAMSMPLTRSTASGGMSMPLMRAPDSRVTSTSQMMPTASGDMCTLPVRAPASGGVSSPLVRAPASGTMSTPLRRPSACETVSTELMRASASGHMSTAQTTAMVSGGMSKPLMRAPASGTMPMPLMSAMASGEMSMPLMETMASGATSTLQTSVANSRSMSLSQTTYTVSGRMATAPIRASASGARSTSFMRASVSGSMPMPLPRATASGCGMGMSMPQMTATDSRGMSTPLMRASGPGTMSTPQTAFGVMSTPEIKATDSGEASTSHINITASGSKPTSHMTATTPETAKPPPKEVPSFGMLTPALCYLLEEQEAARGSCSVEEEMEIDEEKQMKGFLDDSERMAFLVSLHLGAAERWFILQMEVGEPLSHENKSFLRRSQGIYDSLSEIDILSAVLCHPKQGQKSVRQYATDFLLLARHLSWSDAILRTRFLEGLSEAVTTKMGRIFLKVAGSLKELIDRSLYTECQLAEEKDSPGNSSQVLPTACKRNNEEAMGNELSSQQQTEEHQHVSKRCYYLKEHGDPQEGLHDHLGQSTGHHQKAHTNK</sequence>
<protein>
    <recommendedName>
        <fullName evidence="4">Retrotransposon Gag-like protein 9</fullName>
    </recommendedName>
    <alternativeName>
        <fullName>Retrotransposon gag domain-containing protein 1</fullName>
    </alternativeName>
    <alternativeName>
        <fullName>Tumor antigen BJ-HCC-23</fullName>
    </alternativeName>
</protein>
<comment type="miscellaneous">
    <text evidence="2">RTL9 is one of at least 11 genes called Mar or Mart related to long terminal repeat retrotransposons. They do not correspond to functional retrotransposons, but rather to neofunctionalized retrotransposons genes.</text>
</comment>
<comment type="sequence caution" evidence="3">
    <conflict type="erroneous initiation">
        <sequence resource="EMBL-CDS" id="BAA92556"/>
    </conflict>
    <text>Extended N-terminus.</text>
</comment>
<organism>
    <name type="scientific">Homo sapiens</name>
    <name type="common">Human</name>
    <dbReference type="NCBI Taxonomy" id="9606"/>
    <lineage>
        <taxon>Eukaryota</taxon>
        <taxon>Metazoa</taxon>
        <taxon>Chordata</taxon>
        <taxon>Craniata</taxon>
        <taxon>Vertebrata</taxon>
        <taxon>Euteleostomi</taxon>
        <taxon>Mammalia</taxon>
        <taxon>Eutheria</taxon>
        <taxon>Euarchontoglires</taxon>
        <taxon>Primates</taxon>
        <taxon>Haplorrhini</taxon>
        <taxon>Catarrhini</taxon>
        <taxon>Hominidae</taxon>
        <taxon>Homo</taxon>
    </lineage>
</organism>
<accession>Q8NET4</accession>
<accession>Q9P2M8</accession>
<evidence type="ECO:0000256" key="1">
    <source>
        <dbReference type="SAM" id="MobiDB-lite"/>
    </source>
</evidence>
<evidence type="ECO:0000269" key="2">
    <source>
    </source>
</evidence>
<evidence type="ECO:0000305" key="3"/>
<evidence type="ECO:0000312" key="4">
    <source>
        <dbReference type="HGNC" id="HGNC:29245"/>
    </source>
</evidence>
<name>RTL9_HUMAN</name>
<dbReference type="EMBL" id="AY121804">
    <property type="protein sequence ID" value="AAM82752.1"/>
    <property type="molecule type" value="mRNA"/>
</dbReference>
<dbReference type="EMBL" id="AB037739">
    <property type="protein sequence ID" value="BAA92556.1"/>
    <property type="status" value="ALT_INIT"/>
    <property type="molecule type" value="mRNA"/>
</dbReference>
<dbReference type="EMBL" id="BC113670">
    <property type="protein sequence ID" value="AAI13671.1"/>
    <property type="molecule type" value="mRNA"/>
</dbReference>
<dbReference type="EMBL" id="BC117184">
    <property type="protein sequence ID" value="AAI17185.1"/>
    <property type="molecule type" value="mRNA"/>
</dbReference>
<dbReference type="CCDS" id="CCDS14552.1"/>
<dbReference type="RefSeq" id="NP_001372378.1">
    <property type="nucleotide sequence ID" value="NM_001385449.1"/>
</dbReference>
<dbReference type="RefSeq" id="NP_065820.1">
    <property type="nucleotide sequence ID" value="NM_020769.2"/>
</dbReference>
<dbReference type="RefSeq" id="XP_011529300.1">
    <property type="nucleotide sequence ID" value="XM_011530998.2"/>
</dbReference>
<dbReference type="RefSeq" id="XP_011529301.1">
    <property type="nucleotide sequence ID" value="XM_011530999.3"/>
</dbReference>
<dbReference type="RefSeq" id="XP_016885183.1">
    <property type="nucleotide sequence ID" value="XM_017029694.1"/>
</dbReference>
<dbReference type="RefSeq" id="XP_016885184.1">
    <property type="nucleotide sequence ID" value="XM_017029695.2"/>
</dbReference>
<dbReference type="RefSeq" id="XP_047298239.1">
    <property type="nucleotide sequence ID" value="XM_047442283.1"/>
</dbReference>
<dbReference type="RefSeq" id="XP_047298240.1">
    <property type="nucleotide sequence ID" value="XM_047442284.1"/>
</dbReference>
<dbReference type="RefSeq" id="XP_047298241.1">
    <property type="nucleotide sequence ID" value="XM_047442285.1"/>
</dbReference>
<dbReference type="RefSeq" id="XP_047298242.1">
    <property type="nucleotide sequence ID" value="XM_047442286.1"/>
</dbReference>
<dbReference type="RefSeq" id="XP_047298243.1">
    <property type="nucleotide sequence ID" value="XM_047442287.1"/>
</dbReference>
<dbReference type="RefSeq" id="XP_047298244.1">
    <property type="nucleotide sequence ID" value="XM_047442288.1"/>
</dbReference>
<dbReference type="RefSeq" id="XP_054183430.1">
    <property type="nucleotide sequence ID" value="XM_054327455.1"/>
</dbReference>
<dbReference type="RefSeq" id="XP_054183431.1">
    <property type="nucleotide sequence ID" value="XM_054327456.1"/>
</dbReference>
<dbReference type="RefSeq" id="XP_054183432.1">
    <property type="nucleotide sequence ID" value="XM_054327457.1"/>
</dbReference>
<dbReference type="RefSeq" id="XP_054183433.1">
    <property type="nucleotide sequence ID" value="XM_054327458.1"/>
</dbReference>
<dbReference type="RefSeq" id="XP_054183434.1">
    <property type="nucleotide sequence ID" value="XM_054327459.1"/>
</dbReference>
<dbReference type="RefSeq" id="XP_054183435.1">
    <property type="nucleotide sequence ID" value="XM_054327460.1"/>
</dbReference>
<dbReference type="RefSeq" id="XP_054183436.1">
    <property type="nucleotide sequence ID" value="XM_054327461.1"/>
</dbReference>
<dbReference type="RefSeq" id="XP_054183437.1">
    <property type="nucleotide sequence ID" value="XM_054327462.1"/>
</dbReference>
<dbReference type="SMR" id="Q8NET4"/>
<dbReference type="BioGRID" id="121588">
    <property type="interactions" value="12"/>
</dbReference>
<dbReference type="FunCoup" id="Q8NET4">
    <property type="interactions" value="150"/>
</dbReference>
<dbReference type="IntAct" id="Q8NET4">
    <property type="interactions" value="8"/>
</dbReference>
<dbReference type="MINT" id="Q8NET4"/>
<dbReference type="STRING" id="9606.ENSP00000419786"/>
<dbReference type="GlyGen" id="Q8NET4">
    <property type="glycosylation" value="1 site, 1 O-linked glycan (1 site)"/>
</dbReference>
<dbReference type="iPTMnet" id="Q8NET4"/>
<dbReference type="PhosphoSitePlus" id="Q8NET4"/>
<dbReference type="BioMuta" id="RTL9"/>
<dbReference type="DMDM" id="74715429"/>
<dbReference type="jPOST" id="Q8NET4"/>
<dbReference type="MassIVE" id="Q8NET4"/>
<dbReference type="PaxDb" id="9606-ENSP00000419786"/>
<dbReference type="PeptideAtlas" id="Q8NET4"/>
<dbReference type="ProteomicsDB" id="73213"/>
<dbReference type="Antibodypedia" id="29499">
    <property type="antibodies" value="58 antibodies from 19 providers"/>
</dbReference>
<dbReference type="DNASU" id="57529"/>
<dbReference type="Ensembl" id="ENST00000465301.2">
    <property type="protein sequence ID" value="ENSP00000419786.2"/>
    <property type="gene ID" value="ENSG00000243978.9"/>
</dbReference>
<dbReference type="Ensembl" id="ENST00000520821.6">
    <property type="protein sequence ID" value="ENSP00000430395.2"/>
    <property type="gene ID" value="ENSG00000243978.9"/>
</dbReference>
<dbReference type="Ensembl" id="ENST00000540313.1">
    <property type="protein sequence ID" value="ENSP00000441452.1"/>
    <property type="gene ID" value="ENSG00000243978.9"/>
</dbReference>
<dbReference type="GeneID" id="57529"/>
<dbReference type="KEGG" id="hsa:57529"/>
<dbReference type="MANE-Select" id="ENST00000520821.6">
    <property type="protein sequence ID" value="ENSP00000430395.2"/>
    <property type="RefSeq nucleotide sequence ID" value="NM_001385449.1"/>
    <property type="RefSeq protein sequence ID" value="NP_001372378.1"/>
</dbReference>
<dbReference type="UCSC" id="uc004eor.2">
    <property type="organism name" value="human"/>
</dbReference>
<dbReference type="AGR" id="HGNC:29245"/>
<dbReference type="CTD" id="57529"/>
<dbReference type="DisGeNET" id="57529"/>
<dbReference type="GeneCards" id="RTL9"/>
<dbReference type="HGNC" id="HGNC:29245">
    <property type="gene designation" value="RTL9"/>
</dbReference>
<dbReference type="HPA" id="ENSG00000243978">
    <property type="expression patterns" value="Tissue enriched (testis)"/>
</dbReference>
<dbReference type="MIM" id="300965">
    <property type="type" value="gene"/>
</dbReference>
<dbReference type="neXtProt" id="NX_Q8NET4"/>
<dbReference type="OpenTargets" id="ENSG00000243978"/>
<dbReference type="PharmGKB" id="PA134934891"/>
<dbReference type="VEuPathDB" id="HostDB:ENSG00000243978"/>
<dbReference type="eggNOG" id="ENOG502RXMW">
    <property type="taxonomic scope" value="Eukaryota"/>
</dbReference>
<dbReference type="GeneTree" id="ENSGT00730000110943"/>
<dbReference type="HOGENOM" id="CLU_005669_0_0_1"/>
<dbReference type="InParanoid" id="Q8NET4"/>
<dbReference type="OMA" id="LMPDINP"/>
<dbReference type="OrthoDB" id="9836167at2759"/>
<dbReference type="PAN-GO" id="Q8NET4">
    <property type="GO annotations" value="0 GO annotations based on evolutionary models"/>
</dbReference>
<dbReference type="PhylomeDB" id="Q8NET4"/>
<dbReference type="TreeFam" id="TF334822"/>
<dbReference type="PathwayCommons" id="Q8NET4"/>
<dbReference type="SignaLink" id="Q8NET4"/>
<dbReference type="BioGRID-ORCS" id="57529">
    <property type="hits" value="6 hits in 765 CRISPR screens"/>
</dbReference>
<dbReference type="GenomeRNAi" id="57529"/>
<dbReference type="Pharos" id="Q8NET4">
    <property type="development level" value="Tbio"/>
</dbReference>
<dbReference type="PRO" id="PR:Q8NET4"/>
<dbReference type="Proteomes" id="UP000005640">
    <property type="component" value="Chromosome X"/>
</dbReference>
<dbReference type="RNAct" id="Q8NET4">
    <property type="molecule type" value="protein"/>
</dbReference>
<dbReference type="Bgee" id="ENSG00000243978">
    <property type="expression patterns" value="Expressed in right testis and 56 other cell types or tissues"/>
</dbReference>
<dbReference type="ExpressionAtlas" id="Q8NET4">
    <property type="expression patterns" value="baseline and differential"/>
</dbReference>
<dbReference type="InterPro" id="IPR042919">
    <property type="entry name" value="RTL9"/>
</dbReference>
<dbReference type="PANTHER" id="PTHR47702">
    <property type="entry name" value="RETROTRANSPOSON GAG-LIKE PROTEIN 9"/>
    <property type="match status" value="1"/>
</dbReference>
<dbReference type="PANTHER" id="PTHR47702:SF1">
    <property type="entry name" value="RETROTRANSPOSON GAG-LIKE PROTEIN 9"/>
    <property type="match status" value="1"/>
</dbReference>
<feature type="chain" id="PRO_0000259627" description="Retrotransposon Gag-like protein 9">
    <location>
        <begin position="1"/>
        <end position="1388"/>
    </location>
</feature>
<feature type="region of interest" description="Disordered" evidence="1">
    <location>
        <begin position="491"/>
        <end position="511"/>
    </location>
</feature>
<feature type="region of interest" description="Disordered" evidence="1">
    <location>
        <begin position="769"/>
        <end position="790"/>
    </location>
</feature>
<feature type="region of interest" description="Disordered" evidence="1">
    <location>
        <begin position="895"/>
        <end position="918"/>
    </location>
</feature>
<feature type="region of interest" description="Disordered" evidence="1">
    <location>
        <begin position="1100"/>
        <end position="1138"/>
    </location>
</feature>
<feature type="region of interest" description="Disordered" evidence="1">
    <location>
        <begin position="1336"/>
        <end position="1388"/>
    </location>
</feature>
<feature type="compositionally biased region" description="Polar residues" evidence="1">
    <location>
        <begin position="1103"/>
        <end position="1123"/>
    </location>
</feature>
<feature type="compositionally biased region" description="Basic and acidic residues" evidence="1">
    <location>
        <begin position="1359"/>
        <end position="1374"/>
    </location>
</feature>
<feature type="sequence variant" id="VAR_051318" description="In dbSNP:rs35495390.">
    <original>P</original>
    <variation>S</variation>
    <location>
        <position position="777"/>
    </location>
</feature>
<proteinExistence type="evidence at protein level"/>
<reference key="1">
    <citation type="submission" date="2002-06" db="EMBL/GenBank/DDBJ databases">
        <title>Cloning and identification of genes which are differentially expressed in carcinoma.</title>
        <authorList>
            <person name="Dong X.-Y."/>
            <person name="Chen W.-F."/>
        </authorList>
    </citation>
    <scope>NUCLEOTIDE SEQUENCE [MRNA]</scope>
    <source>
        <tissue>Carcinoma</tissue>
    </source>
</reference>
<reference key="2">
    <citation type="journal article" date="2000" name="DNA Res.">
        <title>Prediction of the coding sequences of unidentified human genes. XVI. The complete sequences of 150 new cDNA clones from brain which code for large proteins in vitro.</title>
        <authorList>
            <person name="Nagase T."/>
            <person name="Kikuno R."/>
            <person name="Ishikawa K."/>
            <person name="Hirosawa M."/>
            <person name="Ohara O."/>
        </authorList>
    </citation>
    <scope>NUCLEOTIDE SEQUENCE [LARGE SCALE MRNA]</scope>
    <source>
        <tissue>Brain</tissue>
    </source>
</reference>
<reference key="3">
    <citation type="journal article" date="2004" name="Genome Res.">
        <title>The status, quality, and expansion of the NIH full-length cDNA project: the Mammalian Gene Collection (MGC).</title>
        <authorList>
            <consortium name="The MGC Project Team"/>
        </authorList>
    </citation>
    <scope>NUCLEOTIDE SEQUENCE [LARGE SCALE MRNA]</scope>
    <source>
        <tissue>Brain</tissue>
    </source>
</reference>
<reference key="4">
    <citation type="journal article" date="2005" name="Cytogenet. Genome Res.">
        <title>A family of neofunctionalized Ty3/gypsy retrotransposon genes in mammalian genomes.</title>
        <authorList>
            <person name="Brandt J."/>
            <person name="Veith A.-M."/>
            <person name="Volff J.-N."/>
        </authorList>
    </citation>
    <scope>GENE FAMILY</scope>
</reference>
<reference key="5">
    <citation type="journal article" date="2008" name="Proc. Natl. Acad. Sci. U.S.A.">
        <title>A quantitative atlas of mitotic phosphorylation.</title>
        <authorList>
            <person name="Dephoure N."/>
            <person name="Zhou C."/>
            <person name="Villen J."/>
            <person name="Beausoleil S.A."/>
            <person name="Bakalarski C.E."/>
            <person name="Elledge S.J."/>
            <person name="Gygi S.P."/>
        </authorList>
    </citation>
    <scope>IDENTIFICATION BY MASS SPECTROMETRY [LARGE SCALE ANALYSIS]</scope>
    <source>
        <tissue>Cervix carcinoma</tissue>
    </source>
</reference>
<keyword id="KW-1267">Proteomics identification</keyword>
<keyword id="KW-1185">Reference proteome</keyword>